<keyword id="KW-0408">Iron</keyword>
<keyword id="KW-0479">Metal-binding</keyword>
<keyword id="KW-0560">Oxidoreductase</keyword>
<protein>
    <recommendedName>
        <fullName>Superoxide dismutase [Fe]</fullName>
        <ecNumber>1.15.1.1</ecNumber>
    </recommendedName>
</protein>
<accession>P53639</accession>
<proteinExistence type="inferred from homology"/>
<organism>
    <name type="scientific">Campylobacter coli</name>
    <dbReference type="NCBI Taxonomy" id="195"/>
    <lineage>
        <taxon>Bacteria</taxon>
        <taxon>Pseudomonadati</taxon>
        <taxon>Campylobacterota</taxon>
        <taxon>Epsilonproteobacteria</taxon>
        <taxon>Campylobacterales</taxon>
        <taxon>Campylobacteraceae</taxon>
        <taxon>Campylobacter</taxon>
    </lineage>
</organism>
<gene>
    <name type="primary">sodB</name>
</gene>
<sequence length="220" mass="24894">MFELRKLPYDTNAFGDFLSAETFSYHHGKHHNTYVTNLNNLIKYTEFASKDLVSIIKSSSGGVFNNAAQVYNHDFYFDCIKPITGCGCGGSCQSMDANLQAALEKEFGSLENFKAEFIKGATGVFGSGWFWLVYNTKNQKLEFVGTSNAATPITEDKVPLLVVDVWEHAYYVDHRNARPAYLEKFYAHINWEFVAKAYEWALKEGMGSVSFYANELHPVK</sequence>
<feature type="chain" id="PRO_0000159975" description="Superoxide dismutase [Fe]">
    <location>
        <begin position="1"/>
        <end position="220"/>
    </location>
</feature>
<feature type="binding site" evidence="1">
    <location>
        <position position="26"/>
    </location>
    <ligand>
        <name>Fe cation</name>
        <dbReference type="ChEBI" id="CHEBI:24875"/>
    </ligand>
</feature>
<feature type="binding site" evidence="1">
    <location>
        <position position="73"/>
    </location>
    <ligand>
        <name>Fe cation</name>
        <dbReference type="ChEBI" id="CHEBI:24875"/>
    </ligand>
</feature>
<feature type="binding site" evidence="1">
    <location>
        <position position="164"/>
    </location>
    <ligand>
        <name>Fe cation</name>
        <dbReference type="ChEBI" id="CHEBI:24875"/>
    </ligand>
</feature>
<feature type="binding site" evidence="1">
    <location>
        <position position="168"/>
    </location>
    <ligand>
        <name>Fe cation</name>
        <dbReference type="ChEBI" id="CHEBI:24875"/>
    </ligand>
</feature>
<evidence type="ECO:0000250" key="1"/>
<evidence type="ECO:0000305" key="2"/>
<dbReference type="EC" id="1.15.1.1"/>
<dbReference type="EMBL" id="X76693">
    <property type="protein sequence ID" value="CAA54124.1"/>
    <property type="molecule type" value="Genomic_DNA"/>
</dbReference>
<dbReference type="PIR" id="S47166">
    <property type="entry name" value="S47166"/>
</dbReference>
<dbReference type="SMR" id="P53639"/>
<dbReference type="STRING" id="195.ATE51_03994"/>
<dbReference type="eggNOG" id="COG0605">
    <property type="taxonomic scope" value="Bacteria"/>
</dbReference>
<dbReference type="GO" id="GO:0046872">
    <property type="term" value="F:metal ion binding"/>
    <property type="evidence" value="ECO:0007669"/>
    <property type="project" value="UniProtKB-KW"/>
</dbReference>
<dbReference type="GO" id="GO:0004784">
    <property type="term" value="F:superoxide dismutase activity"/>
    <property type="evidence" value="ECO:0007669"/>
    <property type="project" value="UniProtKB-EC"/>
</dbReference>
<dbReference type="FunFam" id="1.10.287.990:FF:000002">
    <property type="entry name" value="Superoxide dismutase"/>
    <property type="match status" value="1"/>
</dbReference>
<dbReference type="Gene3D" id="1.10.287.990">
    <property type="entry name" value="Fe,Mn superoxide dismutase (SOD) domain"/>
    <property type="match status" value="1"/>
</dbReference>
<dbReference type="Gene3D" id="3.55.40.20">
    <property type="entry name" value="Iron/manganese superoxide dismutase, C-terminal domain"/>
    <property type="match status" value="1"/>
</dbReference>
<dbReference type="InterPro" id="IPR001189">
    <property type="entry name" value="Mn/Fe_SOD"/>
</dbReference>
<dbReference type="InterPro" id="IPR019833">
    <property type="entry name" value="Mn/Fe_SOD_BS"/>
</dbReference>
<dbReference type="InterPro" id="IPR019832">
    <property type="entry name" value="Mn/Fe_SOD_C"/>
</dbReference>
<dbReference type="InterPro" id="IPR019831">
    <property type="entry name" value="Mn/Fe_SOD_N"/>
</dbReference>
<dbReference type="InterPro" id="IPR036324">
    <property type="entry name" value="Mn/Fe_SOD_N_sf"/>
</dbReference>
<dbReference type="InterPro" id="IPR036314">
    <property type="entry name" value="SOD_C_sf"/>
</dbReference>
<dbReference type="PANTHER" id="PTHR42769">
    <property type="entry name" value="SUPEROXIDE DISMUTASE"/>
    <property type="match status" value="1"/>
</dbReference>
<dbReference type="PANTHER" id="PTHR42769:SF3">
    <property type="entry name" value="SUPEROXIDE DISMUTASE [FE] 2, CHLOROPLASTIC"/>
    <property type="match status" value="1"/>
</dbReference>
<dbReference type="Pfam" id="PF02777">
    <property type="entry name" value="Sod_Fe_C"/>
    <property type="match status" value="1"/>
</dbReference>
<dbReference type="Pfam" id="PF00081">
    <property type="entry name" value="Sod_Fe_N"/>
    <property type="match status" value="1"/>
</dbReference>
<dbReference type="PIRSF" id="PIRSF000349">
    <property type="entry name" value="SODismutase"/>
    <property type="match status" value="1"/>
</dbReference>
<dbReference type="PRINTS" id="PR01703">
    <property type="entry name" value="MNSODISMTASE"/>
</dbReference>
<dbReference type="SUPFAM" id="SSF54719">
    <property type="entry name" value="Fe,Mn superoxide dismutase (SOD), C-terminal domain"/>
    <property type="match status" value="1"/>
</dbReference>
<dbReference type="SUPFAM" id="SSF46609">
    <property type="entry name" value="Fe,Mn superoxide dismutase (SOD), N-terminal domain"/>
    <property type="match status" value="1"/>
</dbReference>
<dbReference type="PROSITE" id="PS00088">
    <property type="entry name" value="SOD_MN"/>
    <property type="match status" value="1"/>
</dbReference>
<comment type="function">
    <text>Destroys superoxide anion radicals which are normally produced within the cells and which are toxic to biological systems.</text>
</comment>
<comment type="catalytic activity">
    <reaction>
        <text>2 superoxide + 2 H(+) = H2O2 + O2</text>
        <dbReference type="Rhea" id="RHEA:20696"/>
        <dbReference type="ChEBI" id="CHEBI:15378"/>
        <dbReference type="ChEBI" id="CHEBI:15379"/>
        <dbReference type="ChEBI" id="CHEBI:16240"/>
        <dbReference type="ChEBI" id="CHEBI:18421"/>
        <dbReference type="EC" id="1.15.1.1"/>
    </reaction>
</comment>
<comment type="cofactor">
    <cofactor evidence="1">
        <name>Fe cation</name>
        <dbReference type="ChEBI" id="CHEBI:24875"/>
    </cofactor>
    <text evidence="1">Binds 1 Fe cation per subunit.</text>
</comment>
<comment type="subunit">
    <text evidence="1">Homodimer.</text>
</comment>
<comment type="similarity">
    <text evidence="2">Belongs to the iron/manganese superoxide dismutase family.</text>
</comment>
<reference key="1">
    <citation type="journal article" date="1994" name="Microbiology">
        <title>Cloning, nucleotide sequence and characterization of a gene encoding superoxide dismutase from Campylobacter jejuni and Campylobacter coli.</title>
        <authorList>
            <person name="Purdy D."/>
            <person name="Park S.F."/>
        </authorList>
    </citation>
    <scope>NUCLEOTIDE SEQUENCE [GENOMIC DNA]</scope>
    <source>
        <strain>UA585</strain>
    </source>
</reference>
<name>SODF_CAMCO</name>